<comment type="function">
    <text evidence="1">Component of the helicase/primase complex. Unwinds the DNA at the replication forks and generates single-stranded DNA for both leading and lagging strand synthesis. The primase synthesizes short RNA primers on the lagging strand that the polymerase elongates using dNTPs. Possesses helicase-like motifs and therefore may act as the helicase subunit of the complex.</text>
</comment>
<comment type="subunit">
    <text evidence="1">Associates with the primase and the primase-associated factor to form the helicase-primase complex.</text>
</comment>
<comment type="subcellular location">
    <subcellularLocation>
        <location evidence="1">Host nucleus</location>
    </subcellularLocation>
</comment>
<comment type="similarity">
    <text evidence="1">Belongs to the herpesviridae helicase family.</text>
</comment>
<sequence>MSISSLFGGRYDNKFLLNMSSAPKIELIVDKVASLSERRLEGRLPEDWFRHIMDPETEFNSEFADALCIGIDEFAQPLPFLPFKALLVTGTAGAGKTNSIQTLAANLDCIVTATTSIAAQNLSVVLNRSKSAQVKTIFKTFGFNSSHVSMSERQSYIANDERSIQIQQKQDLSIYWNVISDIADRALGAVACKTKELPDLCESSVIVIDEAGVILRHILHTVVFFYWFYNALYKTPLYEDGIVPCIVCVGSPTQSNALVTSFNPLTQNKDVKRGIDVLSALICDDVLSKYCEVDNNWIIFVNNKRCADHAFGDFLKHIEFGLPLKPELIEYVDQFVKPASYIRNPMNEIETTRLFLSHNEVKNYFRSLHEQVEVTNRNNLFVFPVYFLIKNKTFEDYKSEIGNFSLEIEPWFKSNIHRLNTYSQFADQDLSKTVQLEEIVLEDGSVEETLITCHLKHIRNSSIGVTSKIKASTVGFSGTYEKFVELLQSDLFIEKTSCDQTIHAYSFLSGLMFGGMYSFCCSKFTTPEVLMEIKNIKMPSIEFLESEMSRMSPDVQTVETDERYDFGLVNDGLSDVDLLEIDPCGDPFFTRYSKLPLTNSLSFEEISLLYTTFKDIFISRFAILQKHTKGKFGKTLLVTYNRNNVSRKQCGEIYSHLKSFYGMLTYAIPANNYTLEGYTNDNVVHLGTDKQLPQILYKKGLPRLVIKDEMGFISVLDNNVSKFIDVVNGQSFHLCTTVDYATVSKVSMTITKSQGLSIQKVAIDFGSDPKNLKLSSIYVGMSRVTDPNNLIMNVNPLRLNYENDNFIAPHIVKALKNENTMLIF</sequence>
<accession>P52356</accession>
<evidence type="ECO:0000255" key="1">
    <source>
        <dbReference type="HAMAP-Rule" id="MF_04030"/>
    </source>
</evidence>
<organism>
    <name type="scientific">Human herpesvirus 6A (strain Uganda-1102)</name>
    <name type="common">HHV-6 variant A</name>
    <name type="synonym">Human B lymphotropic virus</name>
    <dbReference type="NCBI Taxonomy" id="10370"/>
    <lineage>
        <taxon>Viruses</taxon>
        <taxon>Duplodnaviria</taxon>
        <taxon>Heunggongvirae</taxon>
        <taxon>Peploviricota</taxon>
        <taxon>Herviviricetes</taxon>
        <taxon>Herpesvirales</taxon>
        <taxon>Orthoherpesviridae</taxon>
        <taxon>Betaherpesvirinae</taxon>
        <taxon>Roseolovirus</taxon>
        <taxon>Roseolovirus humanbeta6a</taxon>
        <taxon>Human betaherpesvirus 6A</taxon>
    </lineage>
</organism>
<proteinExistence type="inferred from homology"/>
<organismHost>
    <name type="scientific">Homo sapiens</name>
    <name type="common">Human</name>
    <dbReference type="NCBI Taxonomy" id="9606"/>
</organismHost>
<protein>
    <recommendedName>
        <fullName evidence="1">DNA replication helicase</fullName>
        <ecNumber evidence="1">3.6.4.-</ecNumber>
    </recommendedName>
</protein>
<reference key="1">
    <citation type="journal article" date="1994" name="Virology">
        <title>Nucleotide sequence analysis of a 21-kbp region of the genome of human herpesvirus-6 containing homologues of human cytomegalovirus major immediate-early and replication genes.</title>
        <authorList>
            <person name="Nicholas J."/>
        </authorList>
    </citation>
    <scope>NUCLEOTIDE SEQUENCE [GENOMIC DNA]</scope>
</reference>
<reference key="2">
    <citation type="journal article" date="1995" name="Virology">
        <title>The DNA sequence of human herpesvirus-6: structure, coding content, and genome evolution.</title>
        <authorList>
            <person name="Gompels U.A."/>
            <person name="Nicholas J."/>
            <person name="Lawrence G.L."/>
            <person name="Jones M."/>
            <person name="Thomson B.J."/>
            <person name="Martin M.E.D."/>
            <person name="Efstathiou S."/>
            <person name="Craxton M.A."/>
            <person name="Macaulay H.A."/>
        </authorList>
    </citation>
    <scope>NUCLEOTIDE SEQUENCE [LARGE SCALE GENOMIC DNA]</scope>
</reference>
<name>HELI_HHV6U</name>
<feature type="chain" id="PRO_0000115849" description="DNA replication helicase">
    <location>
        <begin position="1"/>
        <end position="824"/>
    </location>
</feature>
<feature type="binding site" evidence="1">
    <location>
        <begin position="90"/>
        <end position="97"/>
    </location>
    <ligand>
        <name>ATP</name>
        <dbReference type="ChEBI" id="CHEBI:30616"/>
    </ligand>
</feature>
<dbReference type="EC" id="3.6.4.-" evidence="1"/>
<dbReference type="EMBL" id="U13194">
    <property type="protein sequence ID" value="AAA68468.1"/>
    <property type="molecule type" value="Genomic_DNA"/>
</dbReference>
<dbReference type="EMBL" id="X83413">
    <property type="protein sequence ID" value="CAA58369.1"/>
    <property type="molecule type" value="Genomic_DNA"/>
</dbReference>
<dbReference type="RefSeq" id="NP_042970.1">
    <property type="nucleotide sequence ID" value="NC_001664.2"/>
</dbReference>
<dbReference type="GeneID" id="1487959"/>
<dbReference type="KEGG" id="vg:1487959"/>
<dbReference type="Proteomes" id="UP000009295">
    <property type="component" value="Segment"/>
</dbReference>
<dbReference type="GO" id="GO:0042025">
    <property type="term" value="C:host cell nucleus"/>
    <property type="evidence" value="ECO:0007669"/>
    <property type="project" value="UniProtKB-SubCell"/>
</dbReference>
<dbReference type="GO" id="GO:0005524">
    <property type="term" value="F:ATP binding"/>
    <property type="evidence" value="ECO:0007669"/>
    <property type="project" value="UniProtKB-KW"/>
</dbReference>
<dbReference type="GO" id="GO:0004386">
    <property type="term" value="F:helicase activity"/>
    <property type="evidence" value="ECO:0007669"/>
    <property type="project" value="UniProtKB-KW"/>
</dbReference>
<dbReference type="GO" id="GO:0016787">
    <property type="term" value="F:hydrolase activity"/>
    <property type="evidence" value="ECO:0007669"/>
    <property type="project" value="UniProtKB-KW"/>
</dbReference>
<dbReference type="GO" id="GO:0006260">
    <property type="term" value="P:DNA replication"/>
    <property type="evidence" value="ECO:0007669"/>
    <property type="project" value="UniProtKB-KW"/>
</dbReference>
<dbReference type="CDD" id="cd18809">
    <property type="entry name" value="SF1_C_RecD"/>
    <property type="match status" value="1"/>
</dbReference>
<dbReference type="Gene3D" id="3.40.50.300">
    <property type="entry name" value="P-loop containing nucleotide triphosphate hydrolases"/>
    <property type="match status" value="1"/>
</dbReference>
<dbReference type="HAMAP" id="MF_04030">
    <property type="entry name" value="HSV_HELI"/>
    <property type="match status" value="1"/>
</dbReference>
<dbReference type="InterPro" id="IPR003840">
    <property type="entry name" value="DNA_helicase_dom"/>
</dbReference>
<dbReference type="InterPro" id="IPR034711">
    <property type="entry name" value="HSV_HELI"/>
</dbReference>
<dbReference type="InterPro" id="IPR027417">
    <property type="entry name" value="P-loop_NTPase"/>
</dbReference>
<dbReference type="Pfam" id="PF02689">
    <property type="entry name" value="Herpes_Helicase"/>
    <property type="match status" value="1"/>
</dbReference>
<dbReference type="SUPFAM" id="SSF52540">
    <property type="entry name" value="P-loop containing nucleoside triphosphate hydrolases"/>
    <property type="match status" value="2"/>
</dbReference>
<keyword id="KW-0067">ATP-binding</keyword>
<keyword id="KW-0235">DNA replication</keyword>
<keyword id="KW-0347">Helicase</keyword>
<keyword id="KW-1048">Host nucleus</keyword>
<keyword id="KW-0378">Hydrolase</keyword>
<keyword id="KW-0547">Nucleotide-binding</keyword>
<keyword id="KW-1185">Reference proteome</keyword>
<gene>
    <name evidence="1" type="primary">HELI</name>
    <name type="ordered locus">HDRF2</name>
    <name type="ordered locus">U77</name>
</gene>